<protein>
    <recommendedName>
        <fullName>Non-structural protein of 12.7 kDa</fullName>
        <shortName>ns12.7</shortName>
    </recommendedName>
    <alternativeName>
        <fullName>12.7 kDa accessory protein</fullName>
    </alternativeName>
</protein>
<reference key="1">
    <citation type="journal article" date="1990" name="Nucleic Acids Res.">
        <title>Nucleotide sequence of the bovine enteric coronavirus BECV F15 mRNA 5 and mRNA 6 unique regions.</title>
        <authorList>
            <person name="Woloszyn N."/>
            <person name="Boireau P."/>
            <person name="Laporte J."/>
        </authorList>
    </citation>
    <scope>NUCLEOTIDE SEQUENCE [GENOMIC RNA]</scope>
</reference>
<comment type="similarity">
    <text evidence="1">Belongs to the coronaviruses ns12.7 protein family.</text>
</comment>
<feature type="chain" id="PRO_0000106063" description="Non-structural protein of 12.7 kDa">
    <location>
        <begin position="1"/>
        <end position="109"/>
    </location>
</feature>
<name>NS12_CVBF</name>
<gene>
    <name type="ORF">5a</name>
</gene>
<accession>P69608</accession>
<accession>P15774</accession>
<organismHost>
    <name type="scientific">Bos taurus</name>
    <name type="common">Bovine</name>
    <dbReference type="NCBI Taxonomy" id="9913"/>
</organismHost>
<proteinExistence type="inferred from homology"/>
<dbReference type="EMBL" id="X51347">
    <property type="protein sequence ID" value="CAA35740.1"/>
    <property type="molecule type" value="Genomic_RNA"/>
</dbReference>
<dbReference type="PIR" id="S08408">
    <property type="entry name" value="MNIHB2"/>
</dbReference>
<dbReference type="InterPro" id="IPR006841">
    <property type="entry name" value="Corona_NS2"/>
</dbReference>
<dbReference type="Pfam" id="PF04753">
    <property type="entry name" value="Corona_NS12-7"/>
    <property type="match status" value="1"/>
</dbReference>
<organism>
    <name type="scientific">Bovine coronavirus (strain F15)</name>
    <name type="common">BCoV</name>
    <name type="synonym">BCV</name>
    <dbReference type="NCBI Taxonomy" id="11129"/>
    <lineage>
        <taxon>Viruses</taxon>
        <taxon>Riboviria</taxon>
        <taxon>Orthornavirae</taxon>
        <taxon>Pisuviricota</taxon>
        <taxon>Pisoniviricetes</taxon>
        <taxon>Nidovirales</taxon>
        <taxon>Cornidovirineae</taxon>
        <taxon>Coronaviridae</taxon>
        <taxon>Orthocoronavirinae</taxon>
        <taxon>Betacoronavirus</taxon>
        <taxon>Embecovirus</taxon>
        <taxon>Betacoronavirus 1</taxon>
    </lineage>
</organism>
<sequence>MDIWRPEIKYLRYTNGFNVSELEDACFKFNYKFPKVGYCRVPSHAWCRNQGSFCATLTLYGKSKHYDKYFGVITGFTAFANTVEEAVNKLVFLAVDFITWRRQELNVYG</sequence>
<evidence type="ECO:0000305" key="1"/>